<accession>B8DHN2</accession>
<organism>
    <name type="scientific">Listeria monocytogenes serotype 4a (strain HCC23)</name>
    <dbReference type="NCBI Taxonomy" id="552536"/>
    <lineage>
        <taxon>Bacteria</taxon>
        <taxon>Bacillati</taxon>
        <taxon>Bacillota</taxon>
        <taxon>Bacilli</taxon>
        <taxon>Bacillales</taxon>
        <taxon>Listeriaceae</taxon>
        <taxon>Listeria</taxon>
    </lineage>
</organism>
<comment type="function">
    <text evidence="1">Endonuclease that specifically degrades the RNA of RNA-DNA hybrids.</text>
</comment>
<comment type="catalytic activity">
    <reaction evidence="1">
        <text>Endonucleolytic cleavage to 5'-phosphomonoester.</text>
        <dbReference type="EC" id="3.1.26.4"/>
    </reaction>
</comment>
<comment type="cofactor">
    <cofactor evidence="1">
        <name>Mn(2+)</name>
        <dbReference type="ChEBI" id="CHEBI:29035"/>
    </cofactor>
    <cofactor evidence="1">
        <name>Mg(2+)</name>
        <dbReference type="ChEBI" id="CHEBI:18420"/>
    </cofactor>
    <text evidence="1">Manganese or magnesium. Binds 1 divalent metal ion per monomer in the absence of substrate. May bind a second metal ion after substrate binding.</text>
</comment>
<comment type="subcellular location">
    <subcellularLocation>
        <location evidence="1">Cytoplasm</location>
    </subcellularLocation>
</comment>
<comment type="similarity">
    <text evidence="1">Belongs to the RNase HII family.</text>
</comment>
<reference key="1">
    <citation type="journal article" date="2011" name="J. Bacteriol.">
        <title>Genome sequence of lineage III Listeria monocytogenes strain HCC23.</title>
        <authorList>
            <person name="Steele C.L."/>
            <person name="Donaldson J.R."/>
            <person name="Paul D."/>
            <person name="Banes M.M."/>
            <person name="Arick T."/>
            <person name="Bridges S.M."/>
            <person name="Lawrence M.L."/>
        </authorList>
    </citation>
    <scope>NUCLEOTIDE SEQUENCE [LARGE SCALE GENOMIC DNA]</scope>
    <source>
        <strain>HCC23</strain>
    </source>
</reference>
<evidence type="ECO:0000255" key="1">
    <source>
        <dbReference type="HAMAP-Rule" id="MF_00052"/>
    </source>
</evidence>
<evidence type="ECO:0000255" key="2">
    <source>
        <dbReference type="PROSITE-ProRule" id="PRU01319"/>
    </source>
</evidence>
<dbReference type="EC" id="3.1.26.4" evidence="1"/>
<dbReference type="EMBL" id="CP001175">
    <property type="protein sequence ID" value="ACK39648.1"/>
    <property type="molecule type" value="Genomic_DNA"/>
</dbReference>
<dbReference type="RefSeq" id="WP_012581414.1">
    <property type="nucleotide sequence ID" value="NC_011660.1"/>
</dbReference>
<dbReference type="SMR" id="B8DHN2"/>
<dbReference type="KEGG" id="lmh:LMHCC_1303"/>
<dbReference type="HOGENOM" id="CLU_036532_2_1_9"/>
<dbReference type="GO" id="GO:0005737">
    <property type="term" value="C:cytoplasm"/>
    <property type="evidence" value="ECO:0007669"/>
    <property type="project" value="UniProtKB-SubCell"/>
</dbReference>
<dbReference type="GO" id="GO:0032299">
    <property type="term" value="C:ribonuclease H2 complex"/>
    <property type="evidence" value="ECO:0007669"/>
    <property type="project" value="TreeGrafter"/>
</dbReference>
<dbReference type="GO" id="GO:0030145">
    <property type="term" value="F:manganese ion binding"/>
    <property type="evidence" value="ECO:0007669"/>
    <property type="project" value="UniProtKB-UniRule"/>
</dbReference>
<dbReference type="GO" id="GO:0003723">
    <property type="term" value="F:RNA binding"/>
    <property type="evidence" value="ECO:0007669"/>
    <property type="project" value="InterPro"/>
</dbReference>
<dbReference type="GO" id="GO:0004523">
    <property type="term" value="F:RNA-DNA hybrid ribonuclease activity"/>
    <property type="evidence" value="ECO:0007669"/>
    <property type="project" value="UniProtKB-UniRule"/>
</dbReference>
<dbReference type="GO" id="GO:0043137">
    <property type="term" value="P:DNA replication, removal of RNA primer"/>
    <property type="evidence" value="ECO:0007669"/>
    <property type="project" value="TreeGrafter"/>
</dbReference>
<dbReference type="GO" id="GO:0006298">
    <property type="term" value="P:mismatch repair"/>
    <property type="evidence" value="ECO:0007669"/>
    <property type="project" value="TreeGrafter"/>
</dbReference>
<dbReference type="CDD" id="cd07182">
    <property type="entry name" value="RNase_HII_bacteria_HII_like"/>
    <property type="match status" value="1"/>
</dbReference>
<dbReference type="FunFam" id="3.30.420.10:FF:000006">
    <property type="entry name" value="Ribonuclease HII"/>
    <property type="match status" value="1"/>
</dbReference>
<dbReference type="Gene3D" id="3.30.420.10">
    <property type="entry name" value="Ribonuclease H-like superfamily/Ribonuclease H"/>
    <property type="match status" value="1"/>
</dbReference>
<dbReference type="HAMAP" id="MF_00052_B">
    <property type="entry name" value="RNase_HII_B"/>
    <property type="match status" value="1"/>
</dbReference>
<dbReference type="InterPro" id="IPR022898">
    <property type="entry name" value="RNase_HII"/>
</dbReference>
<dbReference type="InterPro" id="IPR001352">
    <property type="entry name" value="RNase_HII/HIII"/>
</dbReference>
<dbReference type="InterPro" id="IPR024567">
    <property type="entry name" value="RNase_HII/HIII_dom"/>
</dbReference>
<dbReference type="InterPro" id="IPR012337">
    <property type="entry name" value="RNaseH-like_sf"/>
</dbReference>
<dbReference type="InterPro" id="IPR036397">
    <property type="entry name" value="RNaseH_sf"/>
</dbReference>
<dbReference type="NCBIfam" id="NF000594">
    <property type="entry name" value="PRK00015.1-1"/>
    <property type="match status" value="1"/>
</dbReference>
<dbReference type="NCBIfam" id="NF000595">
    <property type="entry name" value="PRK00015.1-3"/>
    <property type="match status" value="1"/>
</dbReference>
<dbReference type="PANTHER" id="PTHR10954">
    <property type="entry name" value="RIBONUCLEASE H2 SUBUNIT A"/>
    <property type="match status" value="1"/>
</dbReference>
<dbReference type="PANTHER" id="PTHR10954:SF18">
    <property type="entry name" value="RIBONUCLEASE HII"/>
    <property type="match status" value="1"/>
</dbReference>
<dbReference type="Pfam" id="PF01351">
    <property type="entry name" value="RNase_HII"/>
    <property type="match status" value="1"/>
</dbReference>
<dbReference type="SUPFAM" id="SSF53098">
    <property type="entry name" value="Ribonuclease H-like"/>
    <property type="match status" value="1"/>
</dbReference>
<dbReference type="PROSITE" id="PS51975">
    <property type="entry name" value="RNASE_H_2"/>
    <property type="match status" value="1"/>
</dbReference>
<gene>
    <name evidence="1" type="primary">rnhB</name>
    <name type="ordered locus">LMHCC_1303</name>
</gene>
<name>RNH2_LISMH</name>
<proteinExistence type="inferred from homology"/>
<sequence length="261" mass="29350">MSDSISVIREKLNQVTSEHDPFFQKCMQDERKGVEKLLQTTRRKWEKEAQLRNKLEEMKQYETDLFQQGYKYIAGVDEVGRGPLAGPVVAAAVILPDDFSVVGINDSKQLSEAKRDALYETIQTEAIAVGVGIIEHNVIDQVNIYEATKLAMRAALDQLQPEPDFVLIDAMPLKYTEAELSLIKGDTKSISIAAASIIAKVTRDRLMQMYDEKYPGYDFANNMGYGTKKHLHGLDTIGICPIHRISFAPVKEAKLHFDSLK</sequence>
<feature type="chain" id="PRO_1000194455" description="Ribonuclease HII">
    <location>
        <begin position="1"/>
        <end position="261"/>
    </location>
</feature>
<feature type="domain" description="RNase H type-2" evidence="2">
    <location>
        <begin position="71"/>
        <end position="259"/>
    </location>
</feature>
<feature type="binding site" evidence="1">
    <location>
        <position position="77"/>
    </location>
    <ligand>
        <name>a divalent metal cation</name>
        <dbReference type="ChEBI" id="CHEBI:60240"/>
    </ligand>
</feature>
<feature type="binding site" evidence="1">
    <location>
        <position position="78"/>
    </location>
    <ligand>
        <name>a divalent metal cation</name>
        <dbReference type="ChEBI" id="CHEBI:60240"/>
    </ligand>
</feature>
<feature type="binding site" evidence="1">
    <location>
        <position position="169"/>
    </location>
    <ligand>
        <name>a divalent metal cation</name>
        <dbReference type="ChEBI" id="CHEBI:60240"/>
    </ligand>
</feature>
<keyword id="KW-0963">Cytoplasm</keyword>
<keyword id="KW-0255">Endonuclease</keyword>
<keyword id="KW-0378">Hydrolase</keyword>
<keyword id="KW-0464">Manganese</keyword>
<keyword id="KW-0479">Metal-binding</keyword>
<keyword id="KW-0540">Nuclease</keyword>
<protein>
    <recommendedName>
        <fullName evidence="1">Ribonuclease HII</fullName>
        <shortName evidence="1">RNase HII</shortName>
        <ecNumber evidence="1">3.1.26.4</ecNumber>
    </recommendedName>
</protein>